<feature type="chain" id="PRO_0000157787" description="Probable GTP-binding protein EngB">
    <location>
        <begin position="1"/>
        <end position="195"/>
    </location>
</feature>
<feature type="domain" description="EngB-type G" evidence="1">
    <location>
        <begin position="24"/>
        <end position="195"/>
    </location>
</feature>
<feature type="binding site" evidence="1">
    <location>
        <begin position="32"/>
        <end position="39"/>
    </location>
    <ligand>
        <name>GTP</name>
        <dbReference type="ChEBI" id="CHEBI:37565"/>
    </ligand>
</feature>
<feature type="binding site" evidence="1">
    <location>
        <position position="39"/>
    </location>
    <ligand>
        <name>Mg(2+)</name>
        <dbReference type="ChEBI" id="CHEBI:18420"/>
    </ligand>
</feature>
<feature type="binding site" evidence="1">
    <location>
        <begin position="59"/>
        <end position="63"/>
    </location>
    <ligand>
        <name>GTP</name>
        <dbReference type="ChEBI" id="CHEBI:37565"/>
    </ligand>
</feature>
<feature type="binding site" evidence="1">
    <location>
        <position position="61"/>
    </location>
    <ligand>
        <name>Mg(2+)</name>
        <dbReference type="ChEBI" id="CHEBI:18420"/>
    </ligand>
</feature>
<feature type="binding site" evidence="1">
    <location>
        <begin position="77"/>
        <end position="80"/>
    </location>
    <ligand>
        <name>GTP</name>
        <dbReference type="ChEBI" id="CHEBI:37565"/>
    </ligand>
</feature>
<feature type="binding site" evidence="1">
    <location>
        <begin position="144"/>
        <end position="147"/>
    </location>
    <ligand>
        <name>GTP</name>
        <dbReference type="ChEBI" id="CHEBI:37565"/>
    </ligand>
</feature>
<feature type="binding site" evidence="1">
    <location>
        <begin position="176"/>
        <end position="178"/>
    </location>
    <ligand>
        <name>GTP</name>
        <dbReference type="ChEBI" id="CHEBI:37565"/>
    </ligand>
</feature>
<organism>
    <name type="scientific">Staphylococcus epidermidis (strain ATCC 35984 / DSM 28319 / BCRC 17069 / CCUG 31568 / BM 3577 / RP62A)</name>
    <dbReference type="NCBI Taxonomy" id="176279"/>
    <lineage>
        <taxon>Bacteria</taxon>
        <taxon>Bacillati</taxon>
        <taxon>Bacillota</taxon>
        <taxon>Bacilli</taxon>
        <taxon>Bacillales</taxon>
        <taxon>Staphylococcaceae</taxon>
        <taxon>Staphylococcus</taxon>
    </lineage>
</organism>
<sequence length="195" mass="22511">MNINFNNINLIISAVKKAQYPDTGLTEVALSGRSNVGKSTFINSMIGRKNMARTSQQPGKTQTLNFYNIDEQLIFVDVPGYGYAKVSKVQREKFGKMIEEYITQRENLKLVIQLVDLRHQPTEDDVLMYNYLKHFDIPTLVICTKEDKIAKGKVQKHIKRIKDKLELESGDNIISYSSIKNSKQQEIWNFIETYI</sequence>
<name>ENGB_STAEQ</name>
<keyword id="KW-0131">Cell cycle</keyword>
<keyword id="KW-0132">Cell division</keyword>
<keyword id="KW-0342">GTP-binding</keyword>
<keyword id="KW-0460">Magnesium</keyword>
<keyword id="KW-0479">Metal-binding</keyword>
<keyword id="KW-0547">Nucleotide-binding</keyword>
<keyword id="KW-1185">Reference proteome</keyword>
<keyword id="KW-0717">Septation</keyword>
<accession>Q5HNN0</accession>
<protein>
    <recommendedName>
        <fullName evidence="1">Probable GTP-binding protein EngB</fullName>
    </recommendedName>
</protein>
<proteinExistence type="inferred from homology"/>
<dbReference type="EMBL" id="CP000029">
    <property type="protein sequence ID" value="AAW54594.1"/>
    <property type="molecule type" value="Genomic_DNA"/>
</dbReference>
<dbReference type="SMR" id="Q5HNN0"/>
<dbReference type="STRING" id="176279.SERP1237"/>
<dbReference type="KEGG" id="ser:SERP1237"/>
<dbReference type="eggNOG" id="COG0218">
    <property type="taxonomic scope" value="Bacteria"/>
</dbReference>
<dbReference type="HOGENOM" id="CLU_033732_3_0_9"/>
<dbReference type="Proteomes" id="UP000000531">
    <property type="component" value="Chromosome"/>
</dbReference>
<dbReference type="GO" id="GO:0005829">
    <property type="term" value="C:cytosol"/>
    <property type="evidence" value="ECO:0007669"/>
    <property type="project" value="TreeGrafter"/>
</dbReference>
<dbReference type="GO" id="GO:0005525">
    <property type="term" value="F:GTP binding"/>
    <property type="evidence" value="ECO:0007669"/>
    <property type="project" value="UniProtKB-UniRule"/>
</dbReference>
<dbReference type="GO" id="GO:0046872">
    <property type="term" value="F:metal ion binding"/>
    <property type="evidence" value="ECO:0007669"/>
    <property type="project" value="UniProtKB-KW"/>
</dbReference>
<dbReference type="GO" id="GO:0000917">
    <property type="term" value="P:division septum assembly"/>
    <property type="evidence" value="ECO:0007669"/>
    <property type="project" value="UniProtKB-KW"/>
</dbReference>
<dbReference type="CDD" id="cd01876">
    <property type="entry name" value="YihA_EngB"/>
    <property type="match status" value="1"/>
</dbReference>
<dbReference type="FunFam" id="3.40.50.300:FF:000098">
    <property type="entry name" value="Probable GTP-binding protein EngB"/>
    <property type="match status" value="1"/>
</dbReference>
<dbReference type="Gene3D" id="3.40.50.300">
    <property type="entry name" value="P-loop containing nucleotide triphosphate hydrolases"/>
    <property type="match status" value="1"/>
</dbReference>
<dbReference type="HAMAP" id="MF_00321">
    <property type="entry name" value="GTPase_EngB"/>
    <property type="match status" value="1"/>
</dbReference>
<dbReference type="InterPro" id="IPR030393">
    <property type="entry name" value="G_ENGB_dom"/>
</dbReference>
<dbReference type="InterPro" id="IPR006073">
    <property type="entry name" value="GTP-bd"/>
</dbReference>
<dbReference type="InterPro" id="IPR019987">
    <property type="entry name" value="GTP-bd_ribosome_bio_YsxC"/>
</dbReference>
<dbReference type="InterPro" id="IPR027417">
    <property type="entry name" value="P-loop_NTPase"/>
</dbReference>
<dbReference type="InterPro" id="IPR005225">
    <property type="entry name" value="Small_GTP-bd"/>
</dbReference>
<dbReference type="NCBIfam" id="TIGR03598">
    <property type="entry name" value="GTPase_YsxC"/>
    <property type="match status" value="1"/>
</dbReference>
<dbReference type="NCBIfam" id="TIGR00231">
    <property type="entry name" value="small_GTP"/>
    <property type="match status" value="1"/>
</dbReference>
<dbReference type="PANTHER" id="PTHR11649:SF13">
    <property type="entry name" value="ENGB-TYPE G DOMAIN-CONTAINING PROTEIN"/>
    <property type="match status" value="1"/>
</dbReference>
<dbReference type="PANTHER" id="PTHR11649">
    <property type="entry name" value="MSS1/TRME-RELATED GTP-BINDING PROTEIN"/>
    <property type="match status" value="1"/>
</dbReference>
<dbReference type="Pfam" id="PF01926">
    <property type="entry name" value="MMR_HSR1"/>
    <property type="match status" value="1"/>
</dbReference>
<dbReference type="SUPFAM" id="SSF52540">
    <property type="entry name" value="P-loop containing nucleoside triphosphate hydrolases"/>
    <property type="match status" value="1"/>
</dbReference>
<dbReference type="PROSITE" id="PS51706">
    <property type="entry name" value="G_ENGB"/>
    <property type="match status" value="1"/>
</dbReference>
<evidence type="ECO:0000255" key="1">
    <source>
        <dbReference type="HAMAP-Rule" id="MF_00321"/>
    </source>
</evidence>
<gene>
    <name evidence="1" type="primary">engB</name>
    <name type="ordered locus">SERP1237</name>
</gene>
<reference key="1">
    <citation type="journal article" date="2005" name="J. Bacteriol.">
        <title>Insights on evolution of virulence and resistance from the complete genome analysis of an early methicillin-resistant Staphylococcus aureus strain and a biofilm-producing methicillin-resistant Staphylococcus epidermidis strain.</title>
        <authorList>
            <person name="Gill S.R."/>
            <person name="Fouts D.E."/>
            <person name="Archer G.L."/>
            <person name="Mongodin E.F."/>
            <person name="DeBoy R.T."/>
            <person name="Ravel J."/>
            <person name="Paulsen I.T."/>
            <person name="Kolonay J.F."/>
            <person name="Brinkac L.M."/>
            <person name="Beanan M.J."/>
            <person name="Dodson R.J."/>
            <person name="Daugherty S.C."/>
            <person name="Madupu R."/>
            <person name="Angiuoli S.V."/>
            <person name="Durkin A.S."/>
            <person name="Haft D.H."/>
            <person name="Vamathevan J.J."/>
            <person name="Khouri H."/>
            <person name="Utterback T.R."/>
            <person name="Lee C."/>
            <person name="Dimitrov G."/>
            <person name="Jiang L."/>
            <person name="Qin H."/>
            <person name="Weidman J."/>
            <person name="Tran K."/>
            <person name="Kang K.H."/>
            <person name="Hance I.R."/>
            <person name="Nelson K.E."/>
            <person name="Fraser C.M."/>
        </authorList>
    </citation>
    <scope>NUCLEOTIDE SEQUENCE [LARGE SCALE GENOMIC DNA]</scope>
    <source>
        <strain>ATCC 35984 / DSM 28319 / BCRC 17069 / CCUG 31568 / BM 3577 / RP62A</strain>
    </source>
</reference>
<comment type="function">
    <text evidence="1">Necessary for normal cell division and for the maintenance of normal septation.</text>
</comment>
<comment type="cofactor">
    <cofactor evidence="1">
        <name>Mg(2+)</name>
        <dbReference type="ChEBI" id="CHEBI:18420"/>
    </cofactor>
</comment>
<comment type="similarity">
    <text evidence="1">Belongs to the TRAFAC class TrmE-Era-EngA-EngB-Septin-like GTPase superfamily. EngB GTPase family.</text>
</comment>